<proteinExistence type="evidence at protein level"/>
<gene>
    <name type="primary">hup</name>
</gene>
<name>DBH_SYNY1</name>
<keyword id="KW-0903">Direct protein sequencing</keyword>
<keyword id="KW-0226">DNA condensation</keyword>
<keyword id="KW-0238">DNA-binding</keyword>
<reference key="1">
    <citation type="journal article" date="1979" name="Biochem. Biophys. Res. Commun.">
        <title>Amino and carboxy terminal sequences of the DNA-binding protein HU from the Cyanobacterium Synechocystis PCC 6701 (ATCC 27170).</title>
        <authorList>
            <person name="Aitken A."/>
            <person name="Rouviere-Yaniv J."/>
        </authorList>
    </citation>
    <scope>PROTEIN SEQUENCE</scope>
    <source>
        <strain>ATCC 27170</strain>
    </source>
</reference>
<accession>P02343</accession>
<feature type="chain" id="PRO_0000104987" description="DNA-binding protein HU">
    <location>
        <begin position="1"/>
        <end position="32"/>
    </location>
</feature>
<feature type="sequence variant">
    <original>T</original>
    <variation>D</variation>
    <location>
        <position position="15"/>
    </location>
</feature>
<feature type="sequence variant">
    <original>F</original>
    <variation>V</variation>
    <location>
        <position position="24"/>
    </location>
</feature>
<feature type="non-consecutive residues" evidence="1">
    <location>
        <begin position="27"/>
        <end position="28"/>
    </location>
</feature>
<evidence type="ECO:0000305" key="1"/>
<sequence>MNKGELVDAVMAKATVTKKQADAFILALDIVA</sequence>
<organism>
    <name type="scientific">Synechocystis sp. (strain PCC 6701)</name>
    <dbReference type="NCBI Taxonomy" id="1144"/>
    <lineage>
        <taxon>Bacteria</taxon>
        <taxon>Bacillati</taxon>
        <taxon>Cyanobacteriota</taxon>
        <taxon>Cyanophyceae</taxon>
        <taxon>Oscillatoriophycideae</taxon>
        <taxon>Chroococcales</taxon>
        <taxon>Geminocystaceae</taxon>
        <taxon>Geminocystis</taxon>
    </lineage>
</organism>
<comment type="function">
    <text>Histone-like DNA-binding protein which is capable of wrapping DNA to stabilize it, and thus to prevent its denaturation under extreme environmental conditions.</text>
</comment>
<comment type="miscellaneous">
    <text>The heterogeneity suggests that there are probably two distinct DNA-binding proteins, as in E.coli.</text>
</comment>
<comment type="similarity">
    <text evidence="1">Belongs to the bacterial histone-like protein family.</text>
</comment>
<protein>
    <recommendedName>
        <fullName>DNA-binding protein HU</fullName>
    </recommendedName>
</protein>
<dbReference type="SMR" id="P02343"/>
<dbReference type="GO" id="GO:0003677">
    <property type="term" value="F:DNA binding"/>
    <property type="evidence" value="ECO:0007669"/>
    <property type="project" value="UniProtKB-KW"/>
</dbReference>
<dbReference type="GO" id="GO:0030261">
    <property type="term" value="P:chromosome condensation"/>
    <property type="evidence" value="ECO:0007669"/>
    <property type="project" value="UniProtKB-KW"/>
</dbReference>